<organism>
    <name type="scientific">Staphylococcus aureus (strain MW2)</name>
    <dbReference type="NCBI Taxonomy" id="196620"/>
    <lineage>
        <taxon>Bacteria</taxon>
        <taxon>Bacillati</taxon>
        <taxon>Bacillota</taxon>
        <taxon>Bacilli</taxon>
        <taxon>Bacillales</taxon>
        <taxon>Staphylococcaceae</taxon>
        <taxon>Staphylococcus</taxon>
    </lineage>
</organism>
<proteinExistence type="inferred from homology"/>
<accession>P67150</accession>
<accession>Q99RT4</accession>
<comment type="subcellular location">
    <subcellularLocation>
        <location evidence="1">Cell membrane</location>
        <topology evidence="1">Multi-pass membrane protein</topology>
    </subcellularLocation>
</comment>
<comment type="similarity">
    <text evidence="1">Belongs to the UPF0060 family.</text>
</comment>
<sequence>MLYPIFIFILAGLCEIGGGYLIWLWLREGQSSLVGLIGGAILMLYGVIATFQSFPSFGRVYAAYGGVFIIMSLIFAMVVDKQMPDKYDVIGAIICIVGVLVMLLPSRA</sequence>
<dbReference type="EMBL" id="BA000033">
    <property type="protein sequence ID" value="BAB96124.1"/>
    <property type="molecule type" value="Genomic_DNA"/>
</dbReference>
<dbReference type="RefSeq" id="WP_000966695.1">
    <property type="nucleotide sequence ID" value="NC_003923.1"/>
</dbReference>
<dbReference type="SMR" id="P67150"/>
<dbReference type="KEGG" id="sam:MW2259"/>
<dbReference type="HOGENOM" id="CLU_117653_0_1_9"/>
<dbReference type="GO" id="GO:0005886">
    <property type="term" value="C:plasma membrane"/>
    <property type="evidence" value="ECO:0007669"/>
    <property type="project" value="UniProtKB-SubCell"/>
</dbReference>
<dbReference type="HAMAP" id="MF_00010">
    <property type="entry name" value="UPF0060"/>
    <property type="match status" value="1"/>
</dbReference>
<dbReference type="InterPro" id="IPR003844">
    <property type="entry name" value="UPF0060"/>
</dbReference>
<dbReference type="NCBIfam" id="NF002586">
    <property type="entry name" value="PRK02237.1"/>
    <property type="match status" value="1"/>
</dbReference>
<dbReference type="PANTHER" id="PTHR36116">
    <property type="entry name" value="UPF0060 MEMBRANE PROTEIN YNFA"/>
    <property type="match status" value="1"/>
</dbReference>
<dbReference type="PANTHER" id="PTHR36116:SF1">
    <property type="entry name" value="UPF0060 MEMBRANE PROTEIN YNFA"/>
    <property type="match status" value="1"/>
</dbReference>
<dbReference type="Pfam" id="PF02694">
    <property type="entry name" value="UPF0060"/>
    <property type="match status" value="1"/>
</dbReference>
<dbReference type="SUPFAM" id="SSF103481">
    <property type="entry name" value="Multidrug resistance efflux transporter EmrE"/>
    <property type="match status" value="1"/>
</dbReference>
<name>Y2259_STAAW</name>
<keyword id="KW-1003">Cell membrane</keyword>
<keyword id="KW-0472">Membrane</keyword>
<keyword id="KW-0812">Transmembrane</keyword>
<keyword id="KW-1133">Transmembrane helix</keyword>
<protein>
    <recommendedName>
        <fullName evidence="1">UPF0060 membrane protein MW2259</fullName>
    </recommendedName>
</protein>
<reference key="1">
    <citation type="journal article" date="2002" name="Lancet">
        <title>Genome and virulence determinants of high virulence community-acquired MRSA.</title>
        <authorList>
            <person name="Baba T."/>
            <person name="Takeuchi F."/>
            <person name="Kuroda M."/>
            <person name="Yuzawa H."/>
            <person name="Aoki K."/>
            <person name="Oguchi A."/>
            <person name="Nagai Y."/>
            <person name="Iwama N."/>
            <person name="Asano K."/>
            <person name="Naimi T."/>
            <person name="Kuroda H."/>
            <person name="Cui L."/>
            <person name="Yamamoto K."/>
            <person name="Hiramatsu K."/>
        </authorList>
    </citation>
    <scope>NUCLEOTIDE SEQUENCE [LARGE SCALE GENOMIC DNA]</scope>
    <source>
        <strain>MW2</strain>
    </source>
</reference>
<evidence type="ECO:0000255" key="1">
    <source>
        <dbReference type="HAMAP-Rule" id="MF_00010"/>
    </source>
</evidence>
<gene>
    <name type="ordered locus">MW2259</name>
</gene>
<feature type="chain" id="PRO_0000162351" description="UPF0060 membrane protein MW2259">
    <location>
        <begin position="1"/>
        <end position="108"/>
    </location>
</feature>
<feature type="transmembrane region" description="Helical" evidence="1">
    <location>
        <begin position="5"/>
        <end position="25"/>
    </location>
</feature>
<feature type="transmembrane region" description="Helical" evidence="1">
    <location>
        <begin position="31"/>
        <end position="51"/>
    </location>
</feature>
<feature type="transmembrane region" description="Helical" evidence="1">
    <location>
        <begin position="60"/>
        <end position="80"/>
    </location>
</feature>
<feature type="transmembrane region" description="Helical" evidence="1">
    <location>
        <begin position="86"/>
        <end position="106"/>
    </location>
</feature>